<organism>
    <name type="scientific">Kluyveromyces lactis (strain ATCC 8585 / CBS 2359 / DSM 70799 / NBRC 1267 / NRRL Y-1140 / WM37)</name>
    <name type="common">Yeast</name>
    <name type="synonym">Candida sphaerica</name>
    <dbReference type="NCBI Taxonomy" id="284590"/>
    <lineage>
        <taxon>Eukaryota</taxon>
        <taxon>Fungi</taxon>
        <taxon>Dikarya</taxon>
        <taxon>Ascomycota</taxon>
        <taxon>Saccharomycotina</taxon>
        <taxon>Saccharomycetes</taxon>
        <taxon>Saccharomycetales</taxon>
        <taxon>Saccharomycetaceae</taxon>
        <taxon>Kluyveromyces</taxon>
    </lineage>
</organism>
<gene>
    <name type="primary">RTT106</name>
    <name type="ordered locus">KLLA0D18986g</name>
</gene>
<keyword id="KW-0143">Chaperone</keyword>
<keyword id="KW-0158">Chromosome</keyword>
<keyword id="KW-0238">DNA-binding</keyword>
<keyword id="KW-0539">Nucleus</keyword>
<keyword id="KW-1185">Reference proteome</keyword>
<keyword id="KW-0804">Transcription</keyword>
<keyword id="KW-0805">Transcription regulation</keyword>
<accession>Q6CQ86</accession>
<comment type="function">
    <text evidence="1">Histones H3 and H4 chaperone involved in the nucleosome formation and heterochromatin silencing. Required for the deposition of H3K56ac-carrying H3-H4 complex onto newly-replicated DNA. Plays a role in the transcriptional regulation of the cell-cycle dependent histone genes by creating a repressive structure at the core histone gene promoter (By similarity).</text>
</comment>
<comment type="subunit">
    <text evidence="1">Interacts with histones H3 and H4.</text>
</comment>
<comment type="subcellular location">
    <subcellularLocation>
        <location evidence="1">Nucleus</location>
    </subcellularLocation>
    <subcellularLocation>
        <location evidence="1">Chromosome</location>
    </subcellularLocation>
</comment>
<comment type="similarity">
    <text evidence="3">Belongs to the RTT106 family.</text>
</comment>
<reference key="1">
    <citation type="journal article" date="2004" name="Nature">
        <title>Genome evolution in yeasts.</title>
        <authorList>
            <person name="Dujon B."/>
            <person name="Sherman D."/>
            <person name="Fischer G."/>
            <person name="Durrens P."/>
            <person name="Casaregola S."/>
            <person name="Lafontaine I."/>
            <person name="de Montigny J."/>
            <person name="Marck C."/>
            <person name="Neuveglise C."/>
            <person name="Talla E."/>
            <person name="Goffard N."/>
            <person name="Frangeul L."/>
            <person name="Aigle M."/>
            <person name="Anthouard V."/>
            <person name="Babour A."/>
            <person name="Barbe V."/>
            <person name="Barnay S."/>
            <person name="Blanchin S."/>
            <person name="Beckerich J.-M."/>
            <person name="Beyne E."/>
            <person name="Bleykasten C."/>
            <person name="Boisrame A."/>
            <person name="Boyer J."/>
            <person name="Cattolico L."/>
            <person name="Confanioleri F."/>
            <person name="de Daruvar A."/>
            <person name="Despons L."/>
            <person name="Fabre E."/>
            <person name="Fairhead C."/>
            <person name="Ferry-Dumazet H."/>
            <person name="Groppi A."/>
            <person name="Hantraye F."/>
            <person name="Hennequin C."/>
            <person name="Jauniaux N."/>
            <person name="Joyet P."/>
            <person name="Kachouri R."/>
            <person name="Kerrest A."/>
            <person name="Koszul R."/>
            <person name="Lemaire M."/>
            <person name="Lesur I."/>
            <person name="Ma L."/>
            <person name="Muller H."/>
            <person name="Nicaud J.-M."/>
            <person name="Nikolski M."/>
            <person name="Oztas S."/>
            <person name="Ozier-Kalogeropoulos O."/>
            <person name="Pellenz S."/>
            <person name="Potier S."/>
            <person name="Richard G.-F."/>
            <person name="Straub M.-L."/>
            <person name="Suleau A."/>
            <person name="Swennen D."/>
            <person name="Tekaia F."/>
            <person name="Wesolowski-Louvel M."/>
            <person name="Westhof E."/>
            <person name="Wirth B."/>
            <person name="Zeniou-Meyer M."/>
            <person name="Zivanovic Y."/>
            <person name="Bolotin-Fukuhara M."/>
            <person name="Thierry A."/>
            <person name="Bouchier C."/>
            <person name="Caudron B."/>
            <person name="Scarpelli C."/>
            <person name="Gaillardin C."/>
            <person name="Weissenbach J."/>
            <person name="Wincker P."/>
            <person name="Souciet J.-L."/>
        </authorList>
    </citation>
    <scope>NUCLEOTIDE SEQUENCE [LARGE SCALE GENOMIC DNA]</scope>
    <source>
        <strain>ATCC 8585 / CBS 2359 / DSM 70799 / NBRC 1267 / NRRL Y-1140 / WM37</strain>
    </source>
</reference>
<name>RT106_KLULA</name>
<sequence>MPNFLEKLSESLREKVLHIVSKEPDSISIFQEVYNCGKDSQDEDIDNKKRKLTTTDTLSVNDENVVFELQDVSVLSPLRKKLTVLIAVDERDQSPMISFNKNNNVEYVINNIKQSVKFSTFLPFPEKKNLVYLYMNYERDGSNADPVLITLNKEQILKQFKERNLLKAEDSDFQLCVDYMRRQAILTGFRISDPFSKSVMDSHHSFFVDCHRGSKEGTLFFLPEHIIFGFKKPILLFESKQIDAITYSSITRLTFNVTLITKDGERFEFSMIDQNKFSEIDEYVKKKQVEDKSMSDELKAKTPKSGQTSDQSALKEALEESGTLDTMNGESDDEDDQNFEEESDLSDGSGSGDDDEDDDDDDDDEDDDSIEKGDDGEEEEDDNEEEEQEEEEKEEQEQEQNRQILNRASPNAAPSNHFSMEIDEIPDLLDENGLIQDIPITMDDDNDEEEEEGSGVEYD</sequence>
<proteinExistence type="inferred from homology"/>
<feature type="chain" id="PRO_0000320493" description="Histone chaperone RTT106">
    <location>
        <begin position="1"/>
        <end position="459"/>
    </location>
</feature>
<feature type="region of interest" description="Disordered" evidence="2">
    <location>
        <begin position="289"/>
        <end position="459"/>
    </location>
</feature>
<feature type="compositionally biased region" description="Basic and acidic residues" evidence="2">
    <location>
        <begin position="289"/>
        <end position="300"/>
    </location>
</feature>
<feature type="compositionally biased region" description="Acidic residues" evidence="2">
    <location>
        <begin position="330"/>
        <end position="345"/>
    </location>
</feature>
<feature type="compositionally biased region" description="Acidic residues" evidence="2">
    <location>
        <begin position="352"/>
        <end position="398"/>
    </location>
</feature>
<feature type="compositionally biased region" description="Polar residues" evidence="2">
    <location>
        <begin position="401"/>
        <end position="418"/>
    </location>
</feature>
<feature type="compositionally biased region" description="Acidic residues" evidence="2">
    <location>
        <begin position="421"/>
        <end position="430"/>
    </location>
</feature>
<feature type="compositionally biased region" description="Acidic residues" evidence="2">
    <location>
        <begin position="442"/>
        <end position="459"/>
    </location>
</feature>
<evidence type="ECO:0000250" key="1"/>
<evidence type="ECO:0000256" key="2">
    <source>
        <dbReference type="SAM" id="MobiDB-lite"/>
    </source>
</evidence>
<evidence type="ECO:0000305" key="3"/>
<dbReference type="EMBL" id="CR382124">
    <property type="protein sequence ID" value="CAH00999.1"/>
    <property type="molecule type" value="Genomic_DNA"/>
</dbReference>
<dbReference type="RefSeq" id="XP_453903.1">
    <property type="nucleotide sequence ID" value="XM_453903.1"/>
</dbReference>
<dbReference type="SMR" id="Q6CQ86"/>
<dbReference type="FunCoup" id="Q6CQ86">
    <property type="interactions" value="167"/>
</dbReference>
<dbReference type="STRING" id="284590.Q6CQ86"/>
<dbReference type="PaxDb" id="284590-Q6CQ86"/>
<dbReference type="KEGG" id="kla:KLLA0_D18986g"/>
<dbReference type="eggNOG" id="ENOG502R9PE">
    <property type="taxonomic scope" value="Eukaryota"/>
</dbReference>
<dbReference type="HOGENOM" id="CLU_040939_1_0_1"/>
<dbReference type="InParanoid" id="Q6CQ86"/>
<dbReference type="OMA" id="TRLTFNV"/>
<dbReference type="Proteomes" id="UP000000598">
    <property type="component" value="Chromosome D"/>
</dbReference>
<dbReference type="GO" id="GO:0005694">
    <property type="term" value="C:chromosome"/>
    <property type="evidence" value="ECO:0007669"/>
    <property type="project" value="UniProtKB-SubCell"/>
</dbReference>
<dbReference type="GO" id="GO:0005634">
    <property type="term" value="C:nucleus"/>
    <property type="evidence" value="ECO:0007669"/>
    <property type="project" value="UniProtKB-SubCell"/>
</dbReference>
<dbReference type="GO" id="GO:0003677">
    <property type="term" value="F:DNA binding"/>
    <property type="evidence" value="ECO:0007669"/>
    <property type="project" value="UniProtKB-KW"/>
</dbReference>
<dbReference type="GO" id="GO:0042393">
    <property type="term" value="F:histone binding"/>
    <property type="evidence" value="ECO:0007669"/>
    <property type="project" value="TreeGrafter"/>
</dbReference>
<dbReference type="GO" id="GO:0031491">
    <property type="term" value="F:nucleosome binding"/>
    <property type="evidence" value="ECO:0007669"/>
    <property type="project" value="TreeGrafter"/>
</dbReference>
<dbReference type="CDD" id="cd13303">
    <property type="entry name" value="PH1-like_Rtt106"/>
    <property type="match status" value="1"/>
</dbReference>
<dbReference type="CDD" id="cd11604">
    <property type="entry name" value="RTT106_N"/>
    <property type="match status" value="1"/>
</dbReference>
<dbReference type="Gene3D" id="2.30.29.120">
    <property type="match status" value="1"/>
</dbReference>
<dbReference type="Gene3D" id="2.30.29.30">
    <property type="entry name" value="Pleckstrin-homology domain (PH domain)/Phosphotyrosine-binding domain (PTB)"/>
    <property type="match status" value="1"/>
</dbReference>
<dbReference type="Gene3D" id="6.10.10.70">
    <property type="entry name" value="RTT106-like"/>
    <property type="match status" value="1"/>
</dbReference>
<dbReference type="InterPro" id="IPR011993">
    <property type="entry name" value="PH-like_dom_sf"/>
</dbReference>
<dbReference type="InterPro" id="IPR013719">
    <property type="entry name" value="RTT106/SPT16-like_middle_dom"/>
</dbReference>
<dbReference type="InterPro" id="IPR050454">
    <property type="entry name" value="RTT106/SSRP1_HistChap/FACT"/>
</dbReference>
<dbReference type="InterPro" id="IPR040993">
    <property type="entry name" value="Rtt106_N"/>
</dbReference>
<dbReference type="InterPro" id="IPR044891">
    <property type="entry name" value="Rtt106_N_sf"/>
</dbReference>
<dbReference type="InterPro" id="IPR040770">
    <property type="entry name" value="Rtt106_PH"/>
</dbReference>
<dbReference type="PANTHER" id="PTHR45849">
    <property type="entry name" value="FACT COMPLEX SUBUNIT SSRP1"/>
    <property type="match status" value="1"/>
</dbReference>
<dbReference type="PANTHER" id="PTHR45849:SF3">
    <property type="entry name" value="HISTONE CHAPERONE RTT106"/>
    <property type="match status" value="1"/>
</dbReference>
<dbReference type="Pfam" id="PF18469">
    <property type="entry name" value="PH_18"/>
    <property type="match status" value="1"/>
</dbReference>
<dbReference type="Pfam" id="PF18215">
    <property type="entry name" value="Rtt106_N"/>
    <property type="match status" value="1"/>
</dbReference>
<dbReference type="Pfam" id="PF08512">
    <property type="entry name" value="Rttp106-like_middle"/>
    <property type="match status" value="1"/>
</dbReference>
<dbReference type="SMART" id="SM01287">
    <property type="entry name" value="Rtt106"/>
    <property type="match status" value="1"/>
</dbReference>
<dbReference type="SUPFAM" id="SSF50729">
    <property type="entry name" value="PH domain-like"/>
    <property type="match status" value="1"/>
</dbReference>
<protein>
    <recommendedName>
        <fullName>Histone chaperone RTT106</fullName>
    </recommendedName>
</protein>